<protein>
    <recommendedName>
        <fullName evidence="1">ATP-dependent Clp protease proteolytic subunit</fullName>
        <ecNumber evidence="1">3.4.21.92</ecNumber>
    </recommendedName>
    <alternativeName>
        <fullName evidence="1">Endopeptidase Clp</fullName>
    </alternativeName>
</protein>
<feature type="chain" id="PRO_1000135169" description="ATP-dependent Clp protease proteolytic subunit">
    <location>
        <begin position="1"/>
        <end position="196"/>
    </location>
</feature>
<feature type="active site" description="Nucleophile" evidence="1">
    <location>
        <position position="96"/>
    </location>
</feature>
<feature type="active site" evidence="1">
    <location>
        <position position="121"/>
    </location>
</feature>
<dbReference type="EC" id="3.4.21.92" evidence="1"/>
<dbReference type="EMBL" id="CP000919">
    <property type="protein sequence ID" value="ACO18891.1"/>
    <property type="molecule type" value="Genomic_DNA"/>
</dbReference>
<dbReference type="RefSeq" id="WP_000613477.1">
    <property type="nucleotide sequence ID" value="NC_012466.1"/>
</dbReference>
<dbReference type="SMR" id="C1CD96"/>
<dbReference type="MEROPS" id="S14.001"/>
<dbReference type="KEGG" id="sjj:SPJ_0685"/>
<dbReference type="HOGENOM" id="CLU_058707_3_2_9"/>
<dbReference type="Proteomes" id="UP000002206">
    <property type="component" value="Chromosome"/>
</dbReference>
<dbReference type="GO" id="GO:0005737">
    <property type="term" value="C:cytoplasm"/>
    <property type="evidence" value="ECO:0007669"/>
    <property type="project" value="UniProtKB-SubCell"/>
</dbReference>
<dbReference type="GO" id="GO:0009368">
    <property type="term" value="C:endopeptidase Clp complex"/>
    <property type="evidence" value="ECO:0007669"/>
    <property type="project" value="TreeGrafter"/>
</dbReference>
<dbReference type="GO" id="GO:0004176">
    <property type="term" value="F:ATP-dependent peptidase activity"/>
    <property type="evidence" value="ECO:0007669"/>
    <property type="project" value="InterPro"/>
</dbReference>
<dbReference type="GO" id="GO:0051117">
    <property type="term" value="F:ATPase binding"/>
    <property type="evidence" value="ECO:0007669"/>
    <property type="project" value="TreeGrafter"/>
</dbReference>
<dbReference type="GO" id="GO:0004252">
    <property type="term" value="F:serine-type endopeptidase activity"/>
    <property type="evidence" value="ECO:0007669"/>
    <property type="project" value="UniProtKB-UniRule"/>
</dbReference>
<dbReference type="GO" id="GO:0006515">
    <property type="term" value="P:protein quality control for misfolded or incompletely synthesized proteins"/>
    <property type="evidence" value="ECO:0007669"/>
    <property type="project" value="TreeGrafter"/>
</dbReference>
<dbReference type="CDD" id="cd07017">
    <property type="entry name" value="S14_ClpP_2"/>
    <property type="match status" value="1"/>
</dbReference>
<dbReference type="FunFam" id="3.90.226.10:FF:000014">
    <property type="entry name" value="ATP-dependent Clp protease proteolytic subunit"/>
    <property type="match status" value="1"/>
</dbReference>
<dbReference type="Gene3D" id="3.90.226.10">
    <property type="entry name" value="2-enoyl-CoA Hydratase, Chain A, domain 1"/>
    <property type="match status" value="1"/>
</dbReference>
<dbReference type="HAMAP" id="MF_00444">
    <property type="entry name" value="ClpP"/>
    <property type="match status" value="1"/>
</dbReference>
<dbReference type="InterPro" id="IPR001907">
    <property type="entry name" value="ClpP"/>
</dbReference>
<dbReference type="InterPro" id="IPR029045">
    <property type="entry name" value="ClpP/crotonase-like_dom_sf"/>
</dbReference>
<dbReference type="InterPro" id="IPR023562">
    <property type="entry name" value="ClpP/TepA"/>
</dbReference>
<dbReference type="InterPro" id="IPR033135">
    <property type="entry name" value="ClpP_His_AS"/>
</dbReference>
<dbReference type="InterPro" id="IPR018215">
    <property type="entry name" value="ClpP_Ser_AS"/>
</dbReference>
<dbReference type="NCBIfam" id="NF001368">
    <property type="entry name" value="PRK00277.1"/>
    <property type="match status" value="1"/>
</dbReference>
<dbReference type="NCBIfam" id="NF009205">
    <property type="entry name" value="PRK12553.1"/>
    <property type="match status" value="1"/>
</dbReference>
<dbReference type="PANTHER" id="PTHR10381">
    <property type="entry name" value="ATP-DEPENDENT CLP PROTEASE PROTEOLYTIC SUBUNIT"/>
    <property type="match status" value="1"/>
</dbReference>
<dbReference type="PANTHER" id="PTHR10381:SF70">
    <property type="entry name" value="ATP-DEPENDENT CLP PROTEASE PROTEOLYTIC SUBUNIT"/>
    <property type="match status" value="1"/>
</dbReference>
<dbReference type="Pfam" id="PF00574">
    <property type="entry name" value="CLP_protease"/>
    <property type="match status" value="1"/>
</dbReference>
<dbReference type="PRINTS" id="PR00127">
    <property type="entry name" value="CLPPROTEASEP"/>
</dbReference>
<dbReference type="SUPFAM" id="SSF52096">
    <property type="entry name" value="ClpP/crotonase"/>
    <property type="match status" value="1"/>
</dbReference>
<dbReference type="PROSITE" id="PS00382">
    <property type="entry name" value="CLP_PROTEASE_HIS"/>
    <property type="match status" value="1"/>
</dbReference>
<dbReference type="PROSITE" id="PS00381">
    <property type="entry name" value="CLP_PROTEASE_SER"/>
    <property type="match status" value="1"/>
</dbReference>
<proteinExistence type="inferred from homology"/>
<accession>C1CD96</accession>
<evidence type="ECO:0000255" key="1">
    <source>
        <dbReference type="HAMAP-Rule" id="MF_00444"/>
    </source>
</evidence>
<reference key="1">
    <citation type="journal article" date="2010" name="Genome Biol.">
        <title>Structure and dynamics of the pan-genome of Streptococcus pneumoniae and closely related species.</title>
        <authorList>
            <person name="Donati C."/>
            <person name="Hiller N.L."/>
            <person name="Tettelin H."/>
            <person name="Muzzi A."/>
            <person name="Croucher N.J."/>
            <person name="Angiuoli S.V."/>
            <person name="Oggioni M."/>
            <person name="Dunning Hotopp J.C."/>
            <person name="Hu F.Z."/>
            <person name="Riley D.R."/>
            <person name="Covacci A."/>
            <person name="Mitchell T.J."/>
            <person name="Bentley S.D."/>
            <person name="Kilian M."/>
            <person name="Ehrlich G.D."/>
            <person name="Rappuoli R."/>
            <person name="Moxon E.R."/>
            <person name="Masignani V."/>
        </authorList>
    </citation>
    <scope>NUCLEOTIDE SEQUENCE [LARGE SCALE GENOMIC DNA]</scope>
    <source>
        <strain>JJA</strain>
    </source>
</reference>
<comment type="function">
    <text evidence="1">Cleaves peptides in various proteins in a process that requires ATP hydrolysis. Has a chymotrypsin-like activity. Plays a major role in the degradation of misfolded proteins.</text>
</comment>
<comment type="catalytic activity">
    <reaction evidence="1">
        <text>Hydrolysis of proteins to small peptides in the presence of ATP and magnesium. alpha-casein is the usual test substrate. In the absence of ATP, only oligopeptides shorter than five residues are hydrolyzed (such as succinyl-Leu-Tyr-|-NHMec, and Leu-Tyr-Leu-|-Tyr-Trp, in which cleavage of the -Tyr-|-Leu- and -Tyr-|-Trp bonds also occurs).</text>
        <dbReference type="EC" id="3.4.21.92"/>
    </reaction>
</comment>
<comment type="subunit">
    <text evidence="1">Fourteen ClpP subunits assemble into 2 heptameric rings which stack back to back to give a disk-like structure with a central cavity, resembling the structure of eukaryotic proteasomes.</text>
</comment>
<comment type="subcellular location">
    <subcellularLocation>
        <location evidence="1">Cytoplasm</location>
    </subcellularLocation>
</comment>
<comment type="similarity">
    <text evidence="1">Belongs to the peptidase S14 family.</text>
</comment>
<name>CLPP_STRZJ</name>
<keyword id="KW-0963">Cytoplasm</keyword>
<keyword id="KW-0378">Hydrolase</keyword>
<keyword id="KW-0645">Protease</keyword>
<keyword id="KW-0720">Serine protease</keyword>
<sequence>MIPVVIEQTSRGERSYDIYSRLLKDRIIMLTGPVEDNMANSVIAQLLFLDAQDSTKDIYLYVNTPGGSVSAGLAIVDTMNFIKADVQTIVMGMAASMGTVIASSGAKGKRFMLPNAEYMIHQPMGGTGGGTQQTDMAIAAEHLLKTRNTLEKILAENSGQSMEKVHADAERDNWMSAQETLEYGFIDEIMANNSLN</sequence>
<organism>
    <name type="scientific">Streptococcus pneumoniae (strain JJA)</name>
    <dbReference type="NCBI Taxonomy" id="488222"/>
    <lineage>
        <taxon>Bacteria</taxon>
        <taxon>Bacillati</taxon>
        <taxon>Bacillota</taxon>
        <taxon>Bacilli</taxon>
        <taxon>Lactobacillales</taxon>
        <taxon>Streptococcaceae</taxon>
        <taxon>Streptococcus</taxon>
    </lineage>
</organism>
<gene>
    <name evidence="1" type="primary">clpP</name>
    <name type="ordered locus">SPJ_0685</name>
</gene>